<evidence type="ECO:0000255" key="1">
    <source>
        <dbReference type="HAMAP-Rule" id="MF_00083"/>
    </source>
</evidence>
<proteinExistence type="inferred from homology"/>
<sequence length="199" mass="22873">MKDNEVFIIGLGNPGKQYIKSRHNIGFLLLETFSKKYDAQFTLKNKLKSRYTEFKINDSIYKLFMPHTYMNNSGDAVKAIVDWYKISLDKVFIIVDDIDLPLGKIRFRKKGSSGGHNGLKDIINKLQTENFNRIKIGIGSPPINETKKQLNTISHVLGNISSQENSTLEKVYQKVIESLEELDIKNEDYIISELNSFHK</sequence>
<gene>
    <name evidence="1" type="primary">pth</name>
    <name type="ordered locus">P9515_02831</name>
</gene>
<feature type="chain" id="PRO_1000010628" description="Peptidyl-tRNA hydrolase">
    <location>
        <begin position="1"/>
        <end position="199"/>
    </location>
</feature>
<feature type="active site" description="Proton acceptor" evidence="1">
    <location>
        <position position="23"/>
    </location>
</feature>
<feature type="binding site" evidence="1">
    <location>
        <position position="18"/>
    </location>
    <ligand>
        <name>tRNA</name>
        <dbReference type="ChEBI" id="CHEBI:17843"/>
    </ligand>
</feature>
<feature type="binding site" evidence="1">
    <location>
        <position position="69"/>
    </location>
    <ligand>
        <name>tRNA</name>
        <dbReference type="ChEBI" id="CHEBI:17843"/>
    </ligand>
</feature>
<feature type="binding site" evidence="1">
    <location>
        <position position="71"/>
    </location>
    <ligand>
        <name>tRNA</name>
        <dbReference type="ChEBI" id="CHEBI:17843"/>
    </ligand>
</feature>
<feature type="binding site" evidence="1">
    <location>
        <position position="117"/>
    </location>
    <ligand>
        <name>tRNA</name>
        <dbReference type="ChEBI" id="CHEBI:17843"/>
    </ligand>
</feature>
<feature type="site" description="Discriminates between blocked and unblocked aminoacyl-tRNA" evidence="1">
    <location>
        <position position="13"/>
    </location>
</feature>
<feature type="site" description="Stabilizes the basic form of H active site to accept a proton" evidence="1">
    <location>
        <position position="96"/>
    </location>
</feature>
<organism>
    <name type="scientific">Prochlorococcus marinus (strain MIT 9515)</name>
    <dbReference type="NCBI Taxonomy" id="167542"/>
    <lineage>
        <taxon>Bacteria</taxon>
        <taxon>Bacillati</taxon>
        <taxon>Cyanobacteriota</taxon>
        <taxon>Cyanophyceae</taxon>
        <taxon>Synechococcales</taxon>
        <taxon>Prochlorococcaceae</taxon>
        <taxon>Prochlorococcus</taxon>
    </lineage>
</organism>
<protein>
    <recommendedName>
        <fullName evidence="1">Peptidyl-tRNA hydrolase</fullName>
        <shortName evidence="1">Pth</shortName>
        <ecNumber evidence="1">3.1.1.29</ecNumber>
    </recommendedName>
</protein>
<dbReference type="EC" id="3.1.1.29" evidence="1"/>
<dbReference type="EMBL" id="CP000552">
    <property type="protein sequence ID" value="ABM71492.1"/>
    <property type="molecule type" value="Genomic_DNA"/>
</dbReference>
<dbReference type="RefSeq" id="WP_011819604.1">
    <property type="nucleotide sequence ID" value="NC_008817.1"/>
</dbReference>
<dbReference type="SMR" id="A2BUN1"/>
<dbReference type="STRING" id="167542.P9515_02831"/>
<dbReference type="GeneID" id="60200396"/>
<dbReference type="KEGG" id="pmc:P9515_02831"/>
<dbReference type="eggNOG" id="COG0193">
    <property type="taxonomic scope" value="Bacteria"/>
</dbReference>
<dbReference type="HOGENOM" id="CLU_062456_4_1_3"/>
<dbReference type="OrthoDB" id="9800507at2"/>
<dbReference type="Proteomes" id="UP000001589">
    <property type="component" value="Chromosome"/>
</dbReference>
<dbReference type="GO" id="GO:0005737">
    <property type="term" value="C:cytoplasm"/>
    <property type="evidence" value="ECO:0007669"/>
    <property type="project" value="UniProtKB-SubCell"/>
</dbReference>
<dbReference type="GO" id="GO:0004045">
    <property type="term" value="F:peptidyl-tRNA hydrolase activity"/>
    <property type="evidence" value="ECO:0007669"/>
    <property type="project" value="UniProtKB-UniRule"/>
</dbReference>
<dbReference type="GO" id="GO:0000049">
    <property type="term" value="F:tRNA binding"/>
    <property type="evidence" value="ECO:0007669"/>
    <property type="project" value="UniProtKB-UniRule"/>
</dbReference>
<dbReference type="GO" id="GO:0006515">
    <property type="term" value="P:protein quality control for misfolded or incompletely synthesized proteins"/>
    <property type="evidence" value="ECO:0007669"/>
    <property type="project" value="UniProtKB-UniRule"/>
</dbReference>
<dbReference type="GO" id="GO:0072344">
    <property type="term" value="P:rescue of stalled ribosome"/>
    <property type="evidence" value="ECO:0007669"/>
    <property type="project" value="UniProtKB-UniRule"/>
</dbReference>
<dbReference type="CDD" id="cd00462">
    <property type="entry name" value="PTH"/>
    <property type="match status" value="1"/>
</dbReference>
<dbReference type="FunFam" id="3.40.50.1470:FF:000001">
    <property type="entry name" value="Peptidyl-tRNA hydrolase"/>
    <property type="match status" value="1"/>
</dbReference>
<dbReference type="Gene3D" id="3.40.50.1470">
    <property type="entry name" value="Peptidyl-tRNA hydrolase"/>
    <property type="match status" value="1"/>
</dbReference>
<dbReference type="HAMAP" id="MF_00083">
    <property type="entry name" value="Pept_tRNA_hydro_bact"/>
    <property type="match status" value="1"/>
</dbReference>
<dbReference type="InterPro" id="IPR001328">
    <property type="entry name" value="Pept_tRNA_hydro"/>
</dbReference>
<dbReference type="InterPro" id="IPR018171">
    <property type="entry name" value="Pept_tRNA_hydro_CS"/>
</dbReference>
<dbReference type="InterPro" id="IPR036416">
    <property type="entry name" value="Pept_tRNA_hydro_sf"/>
</dbReference>
<dbReference type="NCBIfam" id="TIGR00447">
    <property type="entry name" value="pth"/>
    <property type="match status" value="1"/>
</dbReference>
<dbReference type="PANTHER" id="PTHR17224">
    <property type="entry name" value="PEPTIDYL-TRNA HYDROLASE"/>
    <property type="match status" value="1"/>
</dbReference>
<dbReference type="PANTHER" id="PTHR17224:SF1">
    <property type="entry name" value="PEPTIDYL-TRNA HYDROLASE"/>
    <property type="match status" value="1"/>
</dbReference>
<dbReference type="Pfam" id="PF01195">
    <property type="entry name" value="Pept_tRNA_hydro"/>
    <property type="match status" value="1"/>
</dbReference>
<dbReference type="SUPFAM" id="SSF53178">
    <property type="entry name" value="Peptidyl-tRNA hydrolase-like"/>
    <property type="match status" value="1"/>
</dbReference>
<dbReference type="PROSITE" id="PS01196">
    <property type="entry name" value="PEPT_TRNA_HYDROL_2"/>
    <property type="match status" value="1"/>
</dbReference>
<keyword id="KW-0963">Cytoplasm</keyword>
<keyword id="KW-0378">Hydrolase</keyword>
<keyword id="KW-0694">RNA-binding</keyword>
<keyword id="KW-0820">tRNA-binding</keyword>
<reference key="1">
    <citation type="journal article" date="2007" name="PLoS Genet.">
        <title>Patterns and implications of gene gain and loss in the evolution of Prochlorococcus.</title>
        <authorList>
            <person name="Kettler G.C."/>
            <person name="Martiny A.C."/>
            <person name="Huang K."/>
            <person name="Zucker J."/>
            <person name="Coleman M.L."/>
            <person name="Rodrigue S."/>
            <person name="Chen F."/>
            <person name="Lapidus A."/>
            <person name="Ferriera S."/>
            <person name="Johnson J."/>
            <person name="Steglich C."/>
            <person name="Church G.M."/>
            <person name="Richardson P."/>
            <person name="Chisholm S.W."/>
        </authorList>
    </citation>
    <scope>NUCLEOTIDE SEQUENCE [LARGE SCALE GENOMIC DNA]</scope>
    <source>
        <strain>MIT 9515</strain>
    </source>
</reference>
<accession>A2BUN1</accession>
<name>PTH_PROM5</name>
<comment type="function">
    <text evidence="1">Hydrolyzes ribosome-free peptidyl-tRNAs (with 1 or more amino acids incorporated), which drop off the ribosome during protein synthesis, or as a result of ribosome stalling.</text>
</comment>
<comment type="function">
    <text evidence="1">Catalyzes the release of premature peptidyl moieties from peptidyl-tRNA molecules trapped in stalled 50S ribosomal subunits, and thus maintains levels of free tRNAs and 50S ribosomes.</text>
</comment>
<comment type="catalytic activity">
    <reaction evidence="1">
        <text>an N-acyl-L-alpha-aminoacyl-tRNA + H2O = an N-acyl-L-amino acid + a tRNA + H(+)</text>
        <dbReference type="Rhea" id="RHEA:54448"/>
        <dbReference type="Rhea" id="RHEA-COMP:10123"/>
        <dbReference type="Rhea" id="RHEA-COMP:13883"/>
        <dbReference type="ChEBI" id="CHEBI:15377"/>
        <dbReference type="ChEBI" id="CHEBI:15378"/>
        <dbReference type="ChEBI" id="CHEBI:59874"/>
        <dbReference type="ChEBI" id="CHEBI:78442"/>
        <dbReference type="ChEBI" id="CHEBI:138191"/>
        <dbReference type="EC" id="3.1.1.29"/>
    </reaction>
</comment>
<comment type="subunit">
    <text evidence="1">Monomer.</text>
</comment>
<comment type="subcellular location">
    <subcellularLocation>
        <location evidence="1">Cytoplasm</location>
    </subcellularLocation>
</comment>
<comment type="similarity">
    <text evidence="1">Belongs to the PTH family.</text>
</comment>